<name>DAPAT_CHLT2</name>
<protein>
    <recommendedName>
        <fullName evidence="1">LL-diaminopimelate aminotransferase</fullName>
        <shortName evidence="1">DAP-AT</shortName>
        <shortName evidence="1">DAP-aminotransferase</shortName>
        <shortName evidence="1">LL-DAP-aminotransferase</shortName>
        <ecNumber evidence="1">2.6.1.83</ecNumber>
    </recommendedName>
</protein>
<accession>B0B7W0</accession>
<reference key="1">
    <citation type="journal article" date="2008" name="Genome Res.">
        <title>Chlamydia trachomatis: genome sequence analysis of lymphogranuloma venereum isolates.</title>
        <authorList>
            <person name="Thomson N.R."/>
            <person name="Holden M.T.G."/>
            <person name="Carder C."/>
            <person name="Lennard N."/>
            <person name="Lockey S.J."/>
            <person name="Marsh P."/>
            <person name="Skipp P."/>
            <person name="O'Connor C.D."/>
            <person name="Goodhead I."/>
            <person name="Norbertzcak H."/>
            <person name="Harris B."/>
            <person name="Ormond D."/>
            <person name="Rance R."/>
            <person name="Quail M.A."/>
            <person name="Parkhill J."/>
            <person name="Stephens R.S."/>
            <person name="Clarke I.N."/>
        </authorList>
    </citation>
    <scope>NUCLEOTIDE SEQUENCE [LARGE SCALE GENOMIC DNA]</scope>
    <source>
        <strain>ATCC VR-902B / DSM 19102 / 434/Bu</strain>
    </source>
</reference>
<keyword id="KW-0032">Aminotransferase</keyword>
<keyword id="KW-0663">Pyridoxal phosphate</keyword>
<keyword id="KW-0808">Transferase</keyword>
<proteinExistence type="inferred from homology"/>
<evidence type="ECO:0000255" key="1">
    <source>
        <dbReference type="HAMAP-Rule" id="MF_01642"/>
    </source>
</evidence>
<dbReference type="EC" id="2.6.1.83" evidence="1"/>
<dbReference type="EMBL" id="AM884176">
    <property type="protein sequence ID" value="CAP04086.1"/>
    <property type="molecule type" value="Genomic_DNA"/>
</dbReference>
<dbReference type="RefSeq" id="WP_009873777.1">
    <property type="nucleotide sequence ID" value="NC_010287.1"/>
</dbReference>
<dbReference type="RefSeq" id="YP_001654719.1">
    <property type="nucleotide sequence ID" value="NC_010287.1"/>
</dbReference>
<dbReference type="SMR" id="B0B7W0"/>
<dbReference type="KEGG" id="ctb:CTL0646"/>
<dbReference type="PATRIC" id="fig|471472.4.peg.696"/>
<dbReference type="HOGENOM" id="CLU_051433_0_0_0"/>
<dbReference type="UniPathway" id="UPA00034">
    <property type="reaction ID" value="UER00466"/>
</dbReference>
<dbReference type="Proteomes" id="UP001154402">
    <property type="component" value="Chromosome"/>
</dbReference>
<dbReference type="GO" id="GO:0010285">
    <property type="term" value="F:L,L-diaminopimelate aminotransferase activity"/>
    <property type="evidence" value="ECO:0007669"/>
    <property type="project" value="UniProtKB-UniRule"/>
</dbReference>
<dbReference type="GO" id="GO:0030170">
    <property type="term" value="F:pyridoxal phosphate binding"/>
    <property type="evidence" value="ECO:0007669"/>
    <property type="project" value="UniProtKB-UniRule"/>
</dbReference>
<dbReference type="GO" id="GO:0033362">
    <property type="term" value="P:lysine biosynthetic process via diaminopimelate, diaminopimelate-aminotransferase pathway"/>
    <property type="evidence" value="ECO:0007669"/>
    <property type="project" value="UniProtKB-UniRule"/>
</dbReference>
<dbReference type="CDD" id="cd00609">
    <property type="entry name" value="AAT_like"/>
    <property type="match status" value="1"/>
</dbReference>
<dbReference type="FunFam" id="3.40.640.10:FF:000099">
    <property type="entry name" value="LL-diaminopimelate aminotransferase, chloroplastic"/>
    <property type="match status" value="1"/>
</dbReference>
<dbReference type="Gene3D" id="3.90.1150.10">
    <property type="entry name" value="Aspartate Aminotransferase, domain 1"/>
    <property type="match status" value="1"/>
</dbReference>
<dbReference type="Gene3D" id="3.40.640.10">
    <property type="entry name" value="Type I PLP-dependent aspartate aminotransferase-like (Major domain)"/>
    <property type="match status" value="1"/>
</dbReference>
<dbReference type="HAMAP" id="MF_01642">
    <property type="entry name" value="DapL_aminotrans_1"/>
    <property type="match status" value="1"/>
</dbReference>
<dbReference type="InterPro" id="IPR004839">
    <property type="entry name" value="Aminotransferase_I/II_large"/>
</dbReference>
<dbReference type="InterPro" id="IPR019942">
    <property type="entry name" value="DapL/ALD1"/>
</dbReference>
<dbReference type="InterPro" id="IPR004838">
    <property type="entry name" value="NHTrfase_class1_PyrdxlP-BS"/>
</dbReference>
<dbReference type="InterPro" id="IPR015424">
    <property type="entry name" value="PyrdxlP-dep_Trfase"/>
</dbReference>
<dbReference type="InterPro" id="IPR015421">
    <property type="entry name" value="PyrdxlP-dep_Trfase_major"/>
</dbReference>
<dbReference type="InterPro" id="IPR015422">
    <property type="entry name" value="PyrdxlP-dep_Trfase_small"/>
</dbReference>
<dbReference type="NCBIfam" id="TIGR03542">
    <property type="entry name" value="DAPAT_plant"/>
    <property type="match status" value="1"/>
</dbReference>
<dbReference type="PANTHER" id="PTHR43144">
    <property type="entry name" value="AMINOTRANSFERASE"/>
    <property type="match status" value="1"/>
</dbReference>
<dbReference type="Pfam" id="PF00155">
    <property type="entry name" value="Aminotran_1_2"/>
    <property type="match status" value="1"/>
</dbReference>
<dbReference type="SUPFAM" id="SSF53383">
    <property type="entry name" value="PLP-dependent transferases"/>
    <property type="match status" value="1"/>
</dbReference>
<dbReference type="PROSITE" id="PS00105">
    <property type="entry name" value="AA_TRANSFER_CLASS_1"/>
    <property type="match status" value="1"/>
</dbReference>
<comment type="function">
    <text evidence="1">Involved in the synthesis of meso-diaminopimelate (m-DAP or DL-DAP), required for both lysine and peptidoglycan biosynthesis. Catalyzes the direct conversion of tetrahydrodipicolinate to LL-diaminopimelate.</text>
</comment>
<comment type="catalytic activity">
    <reaction evidence="1">
        <text>(2S,6S)-2,6-diaminopimelate + 2-oxoglutarate = (S)-2,3,4,5-tetrahydrodipicolinate + L-glutamate + H2O + H(+)</text>
        <dbReference type="Rhea" id="RHEA:23988"/>
        <dbReference type="ChEBI" id="CHEBI:15377"/>
        <dbReference type="ChEBI" id="CHEBI:15378"/>
        <dbReference type="ChEBI" id="CHEBI:16810"/>
        <dbReference type="ChEBI" id="CHEBI:16845"/>
        <dbReference type="ChEBI" id="CHEBI:29985"/>
        <dbReference type="ChEBI" id="CHEBI:57609"/>
        <dbReference type="EC" id="2.6.1.83"/>
    </reaction>
</comment>
<comment type="cofactor">
    <cofactor evidence="1">
        <name>pyridoxal 5'-phosphate</name>
        <dbReference type="ChEBI" id="CHEBI:597326"/>
    </cofactor>
</comment>
<comment type="pathway">
    <text evidence="1">Amino-acid biosynthesis; L-lysine biosynthesis via DAP pathway; LL-2,6-diaminopimelate from (S)-tetrahydrodipicolinate (aminotransferase route): step 1/1.</text>
</comment>
<comment type="subunit">
    <text evidence="1">Homodimer.</text>
</comment>
<comment type="similarity">
    <text evidence="1">Belongs to the class-I pyridoxal-phosphate-dependent aminotransferase family. LL-diaminopimelate aminotransferase subfamily.</text>
</comment>
<feature type="chain" id="PRO_0000342221" description="LL-diaminopimelate aminotransferase">
    <location>
        <begin position="1"/>
        <end position="394"/>
    </location>
</feature>
<feature type="binding site" evidence="1">
    <location>
        <position position="14"/>
    </location>
    <ligand>
        <name>substrate</name>
    </ligand>
</feature>
<feature type="binding site" evidence="1">
    <location>
        <position position="41"/>
    </location>
    <ligand>
        <name>substrate</name>
    </ligand>
</feature>
<feature type="binding site" evidence="1">
    <location>
        <position position="71"/>
    </location>
    <ligand>
        <name>pyridoxal 5'-phosphate</name>
        <dbReference type="ChEBI" id="CHEBI:597326"/>
    </ligand>
</feature>
<feature type="binding site" evidence="1">
    <location>
        <begin position="104"/>
        <end position="105"/>
    </location>
    <ligand>
        <name>pyridoxal 5'-phosphate</name>
        <dbReference type="ChEBI" id="CHEBI:597326"/>
    </ligand>
</feature>
<feature type="binding site" evidence="1">
    <location>
        <position position="105"/>
    </location>
    <ligand>
        <name>substrate</name>
    </ligand>
</feature>
<feature type="binding site" evidence="1">
    <location>
        <position position="128"/>
    </location>
    <ligand>
        <name>pyridoxal 5'-phosphate</name>
        <dbReference type="ChEBI" id="CHEBI:597326"/>
    </ligand>
</feature>
<feature type="binding site" evidence="1">
    <location>
        <position position="128"/>
    </location>
    <ligand>
        <name>substrate</name>
    </ligand>
</feature>
<feature type="binding site" evidence="1">
    <location>
        <position position="174"/>
    </location>
    <ligand>
        <name>pyridoxal 5'-phosphate</name>
        <dbReference type="ChEBI" id="CHEBI:597326"/>
    </ligand>
</feature>
<feature type="binding site" evidence="1">
    <location>
        <position position="174"/>
    </location>
    <ligand>
        <name>substrate</name>
    </ligand>
</feature>
<feature type="binding site" evidence="1">
    <location>
        <position position="205"/>
    </location>
    <ligand>
        <name>pyridoxal 5'-phosphate</name>
        <dbReference type="ChEBI" id="CHEBI:597326"/>
    </ligand>
</feature>
<feature type="binding site" evidence="1">
    <location>
        <begin position="233"/>
        <end position="235"/>
    </location>
    <ligand>
        <name>pyridoxal 5'-phosphate</name>
        <dbReference type="ChEBI" id="CHEBI:597326"/>
    </ligand>
</feature>
<feature type="binding site" evidence="1">
    <location>
        <position position="244"/>
    </location>
    <ligand>
        <name>pyridoxal 5'-phosphate</name>
        <dbReference type="ChEBI" id="CHEBI:597326"/>
    </ligand>
</feature>
<feature type="binding site" evidence="1">
    <location>
        <position position="275"/>
    </location>
    <ligand>
        <name>pyridoxal 5'-phosphate</name>
        <dbReference type="ChEBI" id="CHEBI:597326"/>
    </ligand>
</feature>
<feature type="binding site" evidence="1">
    <location>
        <position position="275"/>
    </location>
    <ligand>
        <name>substrate</name>
    </ligand>
</feature>
<feature type="binding site" evidence="1">
    <location>
        <position position="369"/>
    </location>
    <ligand>
        <name>substrate</name>
    </ligand>
</feature>
<feature type="modified residue" description="N6-(pyridoxal phosphate)lysine" evidence="1">
    <location>
        <position position="236"/>
    </location>
</feature>
<sequence length="394" mass="43769">MKRNPHFVSLTKNYLFADLQKRVAQFRLENPQHTVINLSIGDTTQPLNASVAEAFASSIARLSSPTTCRGYGPDFGLPALRQKLSEDFYRGCVDAKEIFISDGAKADLFRLLSFFGPNQTVAIQDPSYPAYLDIARLTGAKEIIALPCLQENAFFPEFPEDTHIDILCLCSPNNPTGTVLNKDQLRAIVHYAIEHEILILFDAAYSTFISDPSLPKSIFEIPDARFCAIEINSFSKPLGFAGIRLGWTVIPQELTYADGHFVIQDWERFLSTTFNGASIPAQEAGVAGLSILPQLEAIHYYRENSDLLRKALLATGFEVFGGEHAPYLWVKPTQANISDRDLFDFFLREYHIAITPGIGFGRSGSGFVRFSSLGKREDILAACERLQMAPALQS</sequence>
<gene>
    <name evidence="1" type="primary">dapL</name>
    <name type="ordered locus">CTL0646</name>
</gene>
<organism>
    <name type="scientific">Chlamydia trachomatis serovar L2 (strain ATCC VR-902B / DSM 19102 / 434/Bu)</name>
    <dbReference type="NCBI Taxonomy" id="471472"/>
    <lineage>
        <taxon>Bacteria</taxon>
        <taxon>Pseudomonadati</taxon>
        <taxon>Chlamydiota</taxon>
        <taxon>Chlamydiia</taxon>
        <taxon>Chlamydiales</taxon>
        <taxon>Chlamydiaceae</taxon>
        <taxon>Chlamydia/Chlamydophila group</taxon>
        <taxon>Chlamydia</taxon>
    </lineage>
</organism>